<sequence length="204" mass="22997">MYPDLSQRQTDILEYIKRVIREKGYPPSVREIGDAVGLMSSSTVHGHLQTIEEKGYIRRDPTKPRAIEILDSSSDANEKKTVFVPIIGKVTAGQPILAQENIEDTFPLPVDVVNSDTVFMLRVKGESMIDAGIMDGDLILVRQQKVARNGEIVVAMIDEEATVKRFYKEKTLIRLQPENPYMEPIYSQDVTILGKVIGVFRILH</sequence>
<evidence type="ECO:0000255" key="1">
    <source>
        <dbReference type="HAMAP-Rule" id="MF_00015"/>
    </source>
</evidence>
<feature type="chain" id="PRO_1000116602" description="LexA repressor">
    <location>
        <begin position="1"/>
        <end position="204"/>
    </location>
</feature>
<feature type="DNA-binding region" description="H-T-H motif" evidence="1">
    <location>
        <begin position="29"/>
        <end position="49"/>
    </location>
</feature>
<feature type="active site" description="For autocatalytic cleavage activity" evidence="1">
    <location>
        <position position="127"/>
    </location>
</feature>
<feature type="active site" description="For autocatalytic cleavage activity" evidence="1">
    <location>
        <position position="164"/>
    </location>
</feature>
<feature type="site" description="Cleavage; by autolysis" evidence="1">
    <location>
        <begin position="92"/>
        <end position="93"/>
    </location>
</feature>
<reference key="1">
    <citation type="journal article" date="2012" name="BMC Microbiol.">
        <title>Genome sequence of Desulfitobacterium hafniense DCB-2, a Gram-positive anaerobe capable of dehalogenation and metal reduction.</title>
        <authorList>
            <person name="Kim S.H."/>
            <person name="Harzman C."/>
            <person name="Davis J.K."/>
            <person name="Hutcheson R."/>
            <person name="Broderick J.B."/>
            <person name="Marsh T.L."/>
            <person name="Tiedje J.M."/>
        </authorList>
    </citation>
    <scope>NUCLEOTIDE SEQUENCE [LARGE SCALE GENOMIC DNA]</scope>
    <source>
        <strain>DSM 10664 / DCB-2</strain>
    </source>
</reference>
<dbReference type="EC" id="3.4.21.88" evidence="1"/>
<dbReference type="EMBL" id="CP001336">
    <property type="protein sequence ID" value="ACL20745.1"/>
    <property type="molecule type" value="Genomic_DNA"/>
</dbReference>
<dbReference type="RefSeq" id="WP_011459777.1">
    <property type="nucleotide sequence ID" value="NC_011830.1"/>
</dbReference>
<dbReference type="SMR" id="B8FWD3"/>
<dbReference type="MEROPS" id="S24.001"/>
<dbReference type="KEGG" id="dhd:Dhaf_2719"/>
<dbReference type="HOGENOM" id="CLU_066192_45_1_9"/>
<dbReference type="Proteomes" id="UP000007726">
    <property type="component" value="Chromosome"/>
</dbReference>
<dbReference type="GO" id="GO:0003677">
    <property type="term" value="F:DNA binding"/>
    <property type="evidence" value="ECO:0007669"/>
    <property type="project" value="UniProtKB-UniRule"/>
</dbReference>
<dbReference type="GO" id="GO:0004252">
    <property type="term" value="F:serine-type endopeptidase activity"/>
    <property type="evidence" value="ECO:0007669"/>
    <property type="project" value="UniProtKB-UniRule"/>
</dbReference>
<dbReference type="GO" id="GO:0006281">
    <property type="term" value="P:DNA repair"/>
    <property type="evidence" value="ECO:0007669"/>
    <property type="project" value="UniProtKB-UniRule"/>
</dbReference>
<dbReference type="GO" id="GO:0006260">
    <property type="term" value="P:DNA replication"/>
    <property type="evidence" value="ECO:0007669"/>
    <property type="project" value="UniProtKB-UniRule"/>
</dbReference>
<dbReference type="GO" id="GO:0045892">
    <property type="term" value="P:negative regulation of DNA-templated transcription"/>
    <property type="evidence" value="ECO:0007669"/>
    <property type="project" value="UniProtKB-UniRule"/>
</dbReference>
<dbReference type="GO" id="GO:0006508">
    <property type="term" value="P:proteolysis"/>
    <property type="evidence" value="ECO:0007669"/>
    <property type="project" value="InterPro"/>
</dbReference>
<dbReference type="GO" id="GO:0009432">
    <property type="term" value="P:SOS response"/>
    <property type="evidence" value="ECO:0007669"/>
    <property type="project" value="UniProtKB-UniRule"/>
</dbReference>
<dbReference type="CDD" id="cd06529">
    <property type="entry name" value="S24_LexA-like"/>
    <property type="match status" value="1"/>
</dbReference>
<dbReference type="FunFam" id="1.10.10.10:FF:000009">
    <property type="entry name" value="LexA repressor"/>
    <property type="match status" value="1"/>
</dbReference>
<dbReference type="FunFam" id="2.10.109.10:FF:000001">
    <property type="entry name" value="LexA repressor"/>
    <property type="match status" value="1"/>
</dbReference>
<dbReference type="Gene3D" id="2.10.109.10">
    <property type="entry name" value="Umud Fragment, subunit A"/>
    <property type="match status" value="1"/>
</dbReference>
<dbReference type="Gene3D" id="1.10.10.10">
    <property type="entry name" value="Winged helix-like DNA-binding domain superfamily/Winged helix DNA-binding domain"/>
    <property type="match status" value="1"/>
</dbReference>
<dbReference type="HAMAP" id="MF_00015">
    <property type="entry name" value="LexA"/>
    <property type="match status" value="1"/>
</dbReference>
<dbReference type="InterPro" id="IPR006200">
    <property type="entry name" value="LexA"/>
</dbReference>
<dbReference type="InterPro" id="IPR039418">
    <property type="entry name" value="LexA-like"/>
</dbReference>
<dbReference type="InterPro" id="IPR036286">
    <property type="entry name" value="LexA/Signal_pep-like_sf"/>
</dbReference>
<dbReference type="InterPro" id="IPR006199">
    <property type="entry name" value="LexA_DNA-bd_dom"/>
</dbReference>
<dbReference type="InterPro" id="IPR050077">
    <property type="entry name" value="LexA_repressor"/>
</dbReference>
<dbReference type="InterPro" id="IPR006197">
    <property type="entry name" value="Peptidase_S24_LexA"/>
</dbReference>
<dbReference type="InterPro" id="IPR015927">
    <property type="entry name" value="Peptidase_S24_S26A/B/C"/>
</dbReference>
<dbReference type="InterPro" id="IPR036388">
    <property type="entry name" value="WH-like_DNA-bd_sf"/>
</dbReference>
<dbReference type="InterPro" id="IPR036390">
    <property type="entry name" value="WH_DNA-bd_sf"/>
</dbReference>
<dbReference type="NCBIfam" id="TIGR00498">
    <property type="entry name" value="lexA"/>
    <property type="match status" value="1"/>
</dbReference>
<dbReference type="PANTHER" id="PTHR33516">
    <property type="entry name" value="LEXA REPRESSOR"/>
    <property type="match status" value="1"/>
</dbReference>
<dbReference type="PANTHER" id="PTHR33516:SF2">
    <property type="entry name" value="LEXA REPRESSOR-RELATED"/>
    <property type="match status" value="1"/>
</dbReference>
<dbReference type="Pfam" id="PF01726">
    <property type="entry name" value="LexA_DNA_bind"/>
    <property type="match status" value="1"/>
</dbReference>
<dbReference type="Pfam" id="PF00717">
    <property type="entry name" value="Peptidase_S24"/>
    <property type="match status" value="1"/>
</dbReference>
<dbReference type="PRINTS" id="PR00726">
    <property type="entry name" value="LEXASERPTASE"/>
</dbReference>
<dbReference type="SUPFAM" id="SSF51306">
    <property type="entry name" value="LexA/Signal peptidase"/>
    <property type="match status" value="1"/>
</dbReference>
<dbReference type="SUPFAM" id="SSF46785">
    <property type="entry name" value="Winged helix' DNA-binding domain"/>
    <property type="match status" value="1"/>
</dbReference>
<proteinExistence type="inferred from homology"/>
<accession>B8FWD3</accession>
<comment type="function">
    <text evidence="1">Represses a number of genes involved in the response to DNA damage (SOS response), including recA and lexA. In the presence of single-stranded DNA, RecA interacts with LexA causing an autocatalytic cleavage which disrupts the DNA-binding part of LexA, leading to derepression of the SOS regulon and eventually DNA repair.</text>
</comment>
<comment type="catalytic activity">
    <reaction evidence="1">
        <text>Hydrolysis of Ala-|-Gly bond in repressor LexA.</text>
        <dbReference type="EC" id="3.4.21.88"/>
    </reaction>
</comment>
<comment type="subunit">
    <text evidence="1">Homodimer.</text>
</comment>
<comment type="similarity">
    <text evidence="1">Belongs to the peptidase S24 family.</text>
</comment>
<name>LEXA_DESHD</name>
<organism>
    <name type="scientific">Desulfitobacterium hafniense (strain DSM 10664 / DCB-2)</name>
    <dbReference type="NCBI Taxonomy" id="272564"/>
    <lineage>
        <taxon>Bacteria</taxon>
        <taxon>Bacillati</taxon>
        <taxon>Bacillota</taxon>
        <taxon>Clostridia</taxon>
        <taxon>Eubacteriales</taxon>
        <taxon>Desulfitobacteriaceae</taxon>
        <taxon>Desulfitobacterium</taxon>
    </lineage>
</organism>
<protein>
    <recommendedName>
        <fullName evidence="1">LexA repressor</fullName>
        <ecNumber evidence="1">3.4.21.88</ecNumber>
    </recommendedName>
</protein>
<keyword id="KW-0068">Autocatalytic cleavage</keyword>
<keyword id="KW-0227">DNA damage</keyword>
<keyword id="KW-0234">DNA repair</keyword>
<keyword id="KW-0235">DNA replication</keyword>
<keyword id="KW-0238">DNA-binding</keyword>
<keyword id="KW-0378">Hydrolase</keyword>
<keyword id="KW-0678">Repressor</keyword>
<keyword id="KW-0742">SOS response</keyword>
<keyword id="KW-0804">Transcription</keyword>
<keyword id="KW-0805">Transcription regulation</keyword>
<gene>
    <name evidence="1" type="primary">lexA</name>
    <name type="ordered locus">Dhaf_2719</name>
</gene>